<protein>
    <recommendedName>
        <fullName evidence="1">NADH-quinone oxidoreductase subunit I</fullName>
        <ecNumber evidence="1">7.1.1.-</ecNumber>
    </recommendedName>
    <alternativeName>
        <fullName evidence="1">NADH dehydrogenase I subunit I</fullName>
    </alternativeName>
    <alternativeName>
        <fullName evidence="1">NDH-1 subunit I</fullName>
    </alternativeName>
</protein>
<keyword id="KW-0004">4Fe-4S</keyword>
<keyword id="KW-0997">Cell inner membrane</keyword>
<keyword id="KW-1003">Cell membrane</keyword>
<keyword id="KW-0408">Iron</keyword>
<keyword id="KW-0411">Iron-sulfur</keyword>
<keyword id="KW-0472">Membrane</keyword>
<keyword id="KW-0479">Metal-binding</keyword>
<keyword id="KW-0520">NAD</keyword>
<keyword id="KW-0874">Quinone</keyword>
<keyword id="KW-1185">Reference proteome</keyword>
<keyword id="KW-0677">Repeat</keyword>
<keyword id="KW-1278">Translocase</keyword>
<keyword id="KW-0830">Ubiquinone</keyword>
<comment type="function">
    <text evidence="1">NDH-1 shuttles electrons from NADH, via FMN and iron-sulfur (Fe-S) centers, to quinones in the respiratory chain. The immediate electron acceptor for the enzyme in this species is believed to be ubiquinone. Couples the redox reaction to proton translocation (for every two electrons transferred, four hydrogen ions are translocated across the cytoplasmic membrane), and thus conserves the redox energy in a proton gradient.</text>
</comment>
<comment type="catalytic activity">
    <reaction evidence="1">
        <text>a quinone + NADH + 5 H(+)(in) = a quinol + NAD(+) + 4 H(+)(out)</text>
        <dbReference type="Rhea" id="RHEA:57888"/>
        <dbReference type="ChEBI" id="CHEBI:15378"/>
        <dbReference type="ChEBI" id="CHEBI:24646"/>
        <dbReference type="ChEBI" id="CHEBI:57540"/>
        <dbReference type="ChEBI" id="CHEBI:57945"/>
        <dbReference type="ChEBI" id="CHEBI:132124"/>
    </reaction>
</comment>
<comment type="cofactor">
    <cofactor evidence="1">
        <name>[4Fe-4S] cluster</name>
        <dbReference type="ChEBI" id="CHEBI:49883"/>
    </cofactor>
    <text evidence="1">Binds 2 [4Fe-4S] clusters per subunit.</text>
</comment>
<comment type="subunit">
    <text evidence="1">NDH-1 is composed of 14 different subunits. Subunits NuoA, H, J, K, L, M, N constitute the membrane sector of the complex.</text>
</comment>
<comment type="subcellular location">
    <subcellularLocation>
        <location evidence="1">Cell inner membrane</location>
        <topology evidence="1">Peripheral membrane protein</topology>
    </subcellularLocation>
</comment>
<comment type="similarity">
    <text evidence="1">Belongs to the complex I 23 kDa subunit family.</text>
</comment>
<proteinExistence type="inferred from homology"/>
<gene>
    <name evidence="1" type="primary">nuoI</name>
    <name type="ordered locus">TM1040_0754</name>
</gene>
<dbReference type="EC" id="7.1.1.-" evidence="1"/>
<dbReference type="EMBL" id="CP000377">
    <property type="protein sequence ID" value="ABF63487.1"/>
    <property type="molecule type" value="Genomic_DNA"/>
</dbReference>
<dbReference type="RefSeq" id="WP_011538099.1">
    <property type="nucleotide sequence ID" value="NC_008044.1"/>
</dbReference>
<dbReference type="SMR" id="Q1GIM9"/>
<dbReference type="STRING" id="292414.TM1040_0754"/>
<dbReference type="KEGG" id="sit:TM1040_0754"/>
<dbReference type="eggNOG" id="COG1143">
    <property type="taxonomic scope" value="Bacteria"/>
</dbReference>
<dbReference type="HOGENOM" id="CLU_067218_5_1_5"/>
<dbReference type="OrthoDB" id="9808559at2"/>
<dbReference type="Proteomes" id="UP000000636">
    <property type="component" value="Chromosome"/>
</dbReference>
<dbReference type="GO" id="GO:0005886">
    <property type="term" value="C:plasma membrane"/>
    <property type="evidence" value="ECO:0007669"/>
    <property type="project" value="UniProtKB-SubCell"/>
</dbReference>
<dbReference type="GO" id="GO:0051539">
    <property type="term" value="F:4 iron, 4 sulfur cluster binding"/>
    <property type="evidence" value="ECO:0007669"/>
    <property type="project" value="UniProtKB-KW"/>
</dbReference>
<dbReference type="GO" id="GO:0005506">
    <property type="term" value="F:iron ion binding"/>
    <property type="evidence" value="ECO:0007669"/>
    <property type="project" value="UniProtKB-UniRule"/>
</dbReference>
<dbReference type="GO" id="GO:0050136">
    <property type="term" value="F:NADH:ubiquinone reductase (non-electrogenic) activity"/>
    <property type="evidence" value="ECO:0007669"/>
    <property type="project" value="UniProtKB-UniRule"/>
</dbReference>
<dbReference type="GO" id="GO:0048038">
    <property type="term" value="F:quinone binding"/>
    <property type="evidence" value="ECO:0007669"/>
    <property type="project" value="UniProtKB-KW"/>
</dbReference>
<dbReference type="GO" id="GO:0009060">
    <property type="term" value="P:aerobic respiration"/>
    <property type="evidence" value="ECO:0007669"/>
    <property type="project" value="TreeGrafter"/>
</dbReference>
<dbReference type="FunFam" id="3.30.70.3270:FF:000001">
    <property type="entry name" value="NADH-quinone oxidoreductase subunit I 1"/>
    <property type="match status" value="1"/>
</dbReference>
<dbReference type="Gene3D" id="3.30.70.3270">
    <property type="match status" value="1"/>
</dbReference>
<dbReference type="HAMAP" id="MF_01351">
    <property type="entry name" value="NDH1_NuoI"/>
    <property type="match status" value="1"/>
</dbReference>
<dbReference type="InterPro" id="IPR017896">
    <property type="entry name" value="4Fe4S_Fe-S-bd"/>
</dbReference>
<dbReference type="InterPro" id="IPR017900">
    <property type="entry name" value="4Fe4S_Fe_S_CS"/>
</dbReference>
<dbReference type="InterPro" id="IPR010226">
    <property type="entry name" value="NADH_quinone_OxRdtase_chainI"/>
</dbReference>
<dbReference type="NCBIfam" id="TIGR01971">
    <property type="entry name" value="NuoI"/>
    <property type="match status" value="1"/>
</dbReference>
<dbReference type="NCBIfam" id="NF004538">
    <property type="entry name" value="PRK05888.1-4"/>
    <property type="match status" value="1"/>
</dbReference>
<dbReference type="NCBIfam" id="NF004539">
    <property type="entry name" value="PRK05888.1-5"/>
    <property type="match status" value="1"/>
</dbReference>
<dbReference type="PANTHER" id="PTHR10849:SF20">
    <property type="entry name" value="NADH DEHYDROGENASE [UBIQUINONE] IRON-SULFUR PROTEIN 8, MITOCHONDRIAL"/>
    <property type="match status" value="1"/>
</dbReference>
<dbReference type="PANTHER" id="PTHR10849">
    <property type="entry name" value="NADH DEHYDROGENASE UBIQUINONE IRON-SULFUR PROTEIN 8, MITOCHONDRIAL"/>
    <property type="match status" value="1"/>
</dbReference>
<dbReference type="Pfam" id="PF12838">
    <property type="entry name" value="Fer4_7"/>
    <property type="match status" value="1"/>
</dbReference>
<dbReference type="SUPFAM" id="SSF54862">
    <property type="entry name" value="4Fe-4S ferredoxins"/>
    <property type="match status" value="1"/>
</dbReference>
<dbReference type="PROSITE" id="PS00198">
    <property type="entry name" value="4FE4S_FER_1"/>
    <property type="match status" value="2"/>
</dbReference>
<dbReference type="PROSITE" id="PS51379">
    <property type="entry name" value="4FE4S_FER_2"/>
    <property type="match status" value="2"/>
</dbReference>
<accession>Q1GIM9</accession>
<reference key="1">
    <citation type="submission" date="2006-05" db="EMBL/GenBank/DDBJ databases">
        <title>Complete sequence of chromosome of Silicibacter sp. TM1040.</title>
        <authorList>
            <consortium name="US DOE Joint Genome Institute"/>
            <person name="Copeland A."/>
            <person name="Lucas S."/>
            <person name="Lapidus A."/>
            <person name="Barry K."/>
            <person name="Detter J.C."/>
            <person name="Glavina del Rio T."/>
            <person name="Hammon N."/>
            <person name="Israni S."/>
            <person name="Dalin E."/>
            <person name="Tice H."/>
            <person name="Pitluck S."/>
            <person name="Brettin T."/>
            <person name="Bruce D."/>
            <person name="Han C."/>
            <person name="Tapia R."/>
            <person name="Goodwin L."/>
            <person name="Thompson L.S."/>
            <person name="Gilna P."/>
            <person name="Schmutz J."/>
            <person name="Larimer F."/>
            <person name="Land M."/>
            <person name="Hauser L."/>
            <person name="Kyrpides N."/>
            <person name="Kim E."/>
            <person name="Belas R."/>
            <person name="Moran M.A."/>
            <person name="Buchan A."/>
            <person name="Gonzalez J.M."/>
            <person name="Schell M.A."/>
            <person name="Sun F."/>
            <person name="Richardson P."/>
        </authorList>
    </citation>
    <scope>NUCLEOTIDE SEQUENCE [LARGE SCALE GENOMIC DNA]</scope>
    <source>
        <strain>TM1040</strain>
    </source>
</reference>
<evidence type="ECO:0000255" key="1">
    <source>
        <dbReference type="HAMAP-Rule" id="MF_01351"/>
    </source>
</evidence>
<sequence>MTQIDYTRAAKYFLLQDVWQGFKLGLKYFFAPKATINYPHEKGPLSPRFRGEHALRRYPNGEERCIACKLCEAVCPAQAITIDAEPREDGSRRTTRYDIDMTKCIYCGFCQEACPVDAIVEGPNFEFATETREELFYDKDKLLANGERWEAEIARNLELDAPYR</sequence>
<organism>
    <name type="scientific">Ruegeria sp. (strain TM1040)</name>
    <name type="common">Silicibacter sp.</name>
    <dbReference type="NCBI Taxonomy" id="292414"/>
    <lineage>
        <taxon>Bacteria</taxon>
        <taxon>Pseudomonadati</taxon>
        <taxon>Pseudomonadota</taxon>
        <taxon>Alphaproteobacteria</taxon>
        <taxon>Rhodobacterales</taxon>
        <taxon>Roseobacteraceae</taxon>
        <taxon>Ruegeria</taxon>
    </lineage>
</organism>
<name>NUOI_RUEST</name>
<feature type="chain" id="PRO_0000250945" description="NADH-quinone oxidoreductase subunit I">
    <location>
        <begin position="1"/>
        <end position="164"/>
    </location>
</feature>
<feature type="domain" description="4Fe-4S ferredoxin-type 1" evidence="1">
    <location>
        <begin position="55"/>
        <end position="85"/>
    </location>
</feature>
<feature type="domain" description="4Fe-4S ferredoxin-type 2" evidence="1">
    <location>
        <begin position="95"/>
        <end position="124"/>
    </location>
</feature>
<feature type="binding site" evidence="1">
    <location>
        <position position="65"/>
    </location>
    <ligand>
        <name>[4Fe-4S] cluster</name>
        <dbReference type="ChEBI" id="CHEBI:49883"/>
        <label>1</label>
    </ligand>
</feature>
<feature type="binding site" evidence="1">
    <location>
        <position position="68"/>
    </location>
    <ligand>
        <name>[4Fe-4S] cluster</name>
        <dbReference type="ChEBI" id="CHEBI:49883"/>
        <label>1</label>
    </ligand>
</feature>
<feature type="binding site" evidence="1">
    <location>
        <position position="71"/>
    </location>
    <ligand>
        <name>[4Fe-4S] cluster</name>
        <dbReference type="ChEBI" id="CHEBI:49883"/>
        <label>1</label>
    </ligand>
</feature>
<feature type="binding site" evidence="1">
    <location>
        <position position="75"/>
    </location>
    <ligand>
        <name>[4Fe-4S] cluster</name>
        <dbReference type="ChEBI" id="CHEBI:49883"/>
        <label>2</label>
    </ligand>
</feature>
<feature type="binding site" evidence="1">
    <location>
        <position position="104"/>
    </location>
    <ligand>
        <name>[4Fe-4S] cluster</name>
        <dbReference type="ChEBI" id="CHEBI:49883"/>
        <label>2</label>
    </ligand>
</feature>
<feature type="binding site" evidence="1">
    <location>
        <position position="107"/>
    </location>
    <ligand>
        <name>[4Fe-4S] cluster</name>
        <dbReference type="ChEBI" id="CHEBI:49883"/>
        <label>2</label>
    </ligand>
</feature>
<feature type="binding site" evidence="1">
    <location>
        <position position="110"/>
    </location>
    <ligand>
        <name>[4Fe-4S] cluster</name>
        <dbReference type="ChEBI" id="CHEBI:49883"/>
        <label>2</label>
    </ligand>
</feature>
<feature type="binding site" evidence="1">
    <location>
        <position position="114"/>
    </location>
    <ligand>
        <name>[4Fe-4S] cluster</name>
        <dbReference type="ChEBI" id="CHEBI:49883"/>
        <label>1</label>
    </ligand>
</feature>